<feature type="signal peptide" evidence="2">
    <location>
        <begin position="1"/>
        <end position="22"/>
    </location>
</feature>
<feature type="chain" id="PRO_5014313085" description="Protein CANDIDATE G-PROTEIN COUPLED RECEPTOR 6">
    <location>
        <begin position="23"/>
        <end position="428"/>
    </location>
</feature>
<feature type="transmembrane region" description="Helical; Name=1" evidence="2">
    <location>
        <begin position="173"/>
        <end position="193"/>
    </location>
</feature>
<feature type="transmembrane region" description="Helical; Name=2" evidence="2">
    <location>
        <begin position="202"/>
        <end position="222"/>
    </location>
</feature>
<feature type="transmembrane region" description="Helical; Name=3" evidence="2">
    <location>
        <begin position="238"/>
        <end position="258"/>
    </location>
</feature>
<feature type="transmembrane region" description="Helical; Name=4" evidence="2">
    <location>
        <begin position="276"/>
        <end position="296"/>
    </location>
</feature>
<feature type="transmembrane region" description="Helical; Name=5" evidence="2">
    <location>
        <begin position="310"/>
        <end position="330"/>
    </location>
</feature>
<feature type="transmembrane region" description="Helical; Name=6" evidence="2">
    <location>
        <begin position="356"/>
        <end position="376"/>
    </location>
</feature>
<feature type="transmembrane region" description="Helical; Name=7" evidence="2">
    <location>
        <begin position="385"/>
        <end position="405"/>
    </location>
</feature>
<feature type="glycosylation site" description="N-linked (GlcNAc...) asparagine" evidence="3">
    <location>
        <position position="31"/>
    </location>
</feature>
<feature type="glycosylation site" description="N-linked (GlcNAc...) asparagine" evidence="3">
    <location>
        <position position="89"/>
    </location>
</feature>
<feature type="glycosylation site" description="N-linked (GlcNAc...) asparagine" evidence="3">
    <location>
        <position position="157"/>
    </location>
</feature>
<gene>
    <name evidence="5" type="primary">CAND6</name>
    <name evidence="7" type="ordered locus">At5g02630</name>
    <name evidence="8" type="ORF">T22P11.220</name>
</gene>
<reference key="1">
    <citation type="journal article" date="2000" name="Nature">
        <title>Sequence and analysis of chromosome 5 of the plant Arabidopsis thaliana.</title>
        <authorList>
            <person name="Tabata S."/>
            <person name="Kaneko T."/>
            <person name="Nakamura Y."/>
            <person name="Kotani H."/>
            <person name="Kato T."/>
            <person name="Asamizu E."/>
            <person name="Miyajima N."/>
            <person name="Sasamoto S."/>
            <person name="Kimura T."/>
            <person name="Hosouchi T."/>
            <person name="Kawashima K."/>
            <person name="Kohara M."/>
            <person name="Matsumoto M."/>
            <person name="Matsuno A."/>
            <person name="Muraki A."/>
            <person name="Nakayama S."/>
            <person name="Nakazaki N."/>
            <person name="Naruo K."/>
            <person name="Okumura S."/>
            <person name="Shinpo S."/>
            <person name="Takeuchi C."/>
            <person name="Wada T."/>
            <person name="Watanabe A."/>
            <person name="Yamada M."/>
            <person name="Yasuda M."/>
            <person name="Sato S."/>
            <person name="de la Bastide M."/>
            <person name="Huang E."/>
            <person name="Spiegel L."/>
            <person name="Gnoj L."/>
            <person name="O'Shaughnessy A."/>
            <person name="Preston R."/>
            <person name="Habermann K."/>
            <person name="Murray J."/>
            <person name="Johnson D."/>
            <person name="Rohlfing T."/>
            <person name="Nelson J."/>
            <person name="Stoneking T."/>
            <person name="Pepin K."/>
            <person name="Spieth J."/>
            <person name="Sekhon M."/>
            <person name="Armstrong J."/>
            <person name="Becker M."/>
            <person name="Belter E."/>
            <person name="Cordum H."/>
            <person name="Cordes M."/>
            <person name="Courtney L."/>
            <person name="Courtney W."/>
            <person name="Dante M."/>
            <person name="Du H."/>
            <person name="Edwards J."/>
            <person name="Fryman J."/>
            <person name="Haakensen B."/>
            <person name="Lamar E."/>
            <person name="Latreille P."/>
            <person name="Leonard S."/>
            <person name="Meyer R."/>
            <person name="Mulvaney E."/>
            <person name="Ozersky P."/>
            <person name="Riley A."/>
            <person name="Strowmatt C."/>
            <person name="Wagner-McPherson C."/>
            <person name="Wollam A."/>
            <person name="Yoakum M."/>
            <person name="Bell M."/>
            <person name="Dedhia N."/>
            <person name="Parnell L."/>
            <person name="Shah R."/>
            <person name="Rodriguez M."/>
            <person name="Hoon See L."/>
            <person name="Vil D."/>
            <person name="Baker J."/>
            <person name="Kirchoff K."/>
            <person name="Toth K."/>
            <person name="King L."/>
            <person name="Bahret A."/>
            <person name="Miller B."/>
            <person name="Marra M.A."/>
            <person name="Martienssen R."/>
            <person name="McCombie W.R."/>
            <person name="Wilson R.K."/>
            <person name="Murphy G."/>
            <person name="Bancroft I."/>
            <person name="Volckaert G."/>
            <person name="Wambutt R."/>
            <person name="Duesterhoeft A."/>
            <person name="Stiekema W."/>
            <person name="Pohl T."/>
            <person name="Entian K.-D."/>
            <person name="Terryn N."/>
            <person name="Hartley N."/>
            <person name="Bent E."/>
            <person name="Johnson S."/>
            <person name="Langham S.-A."/>
            <person name="McCullagh B."/>
            <person name="Robben J."/>
            <person name="Grymonprez B."/>
            <person name="Zimmermann W."/>
            <person name="Ramsperger U."/>
            <person name="Wedler H."/>
            <person name="Balke K."/>
            <person name="Wedler E."/>
            <person name="Peters S."/>
            <person name="van Staveren M."/>
            <person name="Dirkse W."/>
            <person name="Mooijman P."/>
            <person name="Klein Lankhorst R."/>
            <person name="Weitzenegger T."/>
            <person name="Bothe G."/>
            <person name="Rose M."/>
            <person name="Hauf J."/>
            <person name="Berneiser S."/>
            <person name="Hempel S."/>
            <person name="Feldpausch M."/>
            <person name="Lamberth S."/>
            <person name="Villarroel R."/>
            <person name="Gielen J."/>
            <person name="Ardiles W."/>
            <person name="Bents O."/>
            <person name="Lemcke K."/>
            <person name="Kolesov G."/>
            <person name="Mayer K.F.X."/>
            <person name="Rudd S."/>
            <person name="Schoof H."/>
            <person name="Schueller C."/>
            <person name="Zaccaria P."/>
            <person name="Mewes H.-W."/>
            <person name="Bevan M."/>
            <person name="Fransz P.F."/>
        </authorList>
    </citation>
    <scope>NUCLEOTIDE SEQUENCE [LARGE SCALE GENOMIC DNA]</scope>
    <source>
        <strain>cv. Columbia</strain>
    </source>
</reference>
<reference key="2">
    <citation type="journal article" date="2017" name="Plant J.">
        <title>Araport11: a complete reannotation of the Arabidopsis thaliana reference genome.</title>
        <authorList>
            <person name="Cheng C.Y."/>
            <person name="Krishnakumar V."/>
            <person name="Chan A.P."/>
            <person name="Thibaud-Nissen F."/>
            <person name="Schobel S."/>
            <person name="Town C.D."/>
        </authorList>
    </citation>
    <scope>GENOME REANNOTATION</scope>
    <source>
        <strain>cv. Columbia</strain>
    </source>
</reference>
<reference key="3">
    <citation type="journal article" date="2002" name="Science">
        <title>Functional annotation of a full-length Arabidopsis cDNA collection.</title>
        <authorList>
            <person name="Seki M."/>
            <person name="Narusaka M."/>
            <person name="Kamiya A."/>
            <person name="Ishida J."/>
            <person name="Satou M."/>
            <person name="Sakurai T."/>
            <person name="Nakajima M."/>
            <person name="Enju A."/>
            <person name="Akiyama K."/>
            <person name="Oono Y."/>
            <person name="Muramatsu M."/>
            <person name="Hayashizaki Y."/>
            <person name="Kawai J."/>
            <person name="Carninci P."/>
            <person name="Itoh M."/>
            <person name="Ishii Y."/>
            <person name="Arakawa T."/>
            <person name="Shibata K."/>
            <person name="Shinagawa A."/>
            <person name="Shinozaki K."/>
        </authorList>
    </citation>
    <scope>NUCLEOTIDE SEQUENCE [LARGE SCALE MRNA]</scope>
    <source>
        <strain>cv. Columbia</strain>
    </source>
</reference>
<reference key="4">
    <citation type="journal article" date="2003" name="Science">
        <title>Empirical analysis of transcriptional activity in the Arabidopsis genome.</title>
        <authorList>
            <person name="Yamada K."/>
            <person name="Lim J."/>
            <person name="Dale J.M."/>
            <person name="Chen H."/>
            <person name="Shinn P."/>
            <person name="Palm C.J."/>
            <person name="Southwick A.M."/>
            <person name="Wu H.C."/>
            <person name="Kim C.J."/>
            <person name="Nguyen M."/>
            <person name="Pham P.K."/>
            <person name="Cheuk R.F."/>
            <person name="Karlin-Newmann G."/>
            <person name="Liu S.X."/>
            <person name="Lam B."/>
            <person name="Sakano H."/>
            <person name="Wu T."/>
            <person name="Yu G."/>
            <person name="Miranda M."/>
            <person name="Quach H.L."/>
            <person name="Tripp M."/>
            <person name="Chang C.H."/>
            <person name="Lee J.M."/>
            <person name="Toriumi M.J."/>
            <person name="Chan M.M."/>
            <person name="Tang C.C."/>
            <person name="Onodera C.S."/>
            <person name="Deng J.M."/>
            <person name="Akiyama K."/>
            <person name="Ansari Y."/>
            <person name="Arakawa T."/>
            <person name="Banh J."/>
            <person name="Banno F."/>
            <person name="Bowser L."/>
            <person name="Brooks S.Y."/>
            <person name="Carninci P."/>
            <person name="Chao Q."/>
            <person name="Choy N."/>
            <person name="Enju A."/>
            <person name="Goldsmith A.D."/>
            <person name="Gurjal M."/>
            <person name="Hansen N.F."/>
            <person name="Hayashizaki Y."/>
            <person name="Johnson-Hopson C."/>
            <person name="Hsuan V.W."/>
            <person name="Iida K."/>
            <person name="Karnes M."/>
            <person name="Khan S."/>
            <person name="Koesema E."/>
            <person name="Ishida J."/>
            <person name="Jiang P.X."/>
            <person name="Jones T."/>
            <person name="Kawai J."/>
            <person name="Kamiya A."/>
            <person name="Meyers C."/>
            <person name="Nakajima M."/>
            <person name="Narusaka M."/>
            <person name="Seki M."/>
            <person name="Sakurai T."/>
            <person name="Satou M."/>
            <person name="Tamse R."/>
            <person name="Vaysberg M."/>
            <person name="Wallender E.K."/>
            <person name="Wong C."/>
            <person name="Yamamura Y."/>
            <person name="Yuan S."/>
            <person name="Shinozaki K."/>
            <person name="Davis R.W."/>
            <person name="Theologis A."/>
            <person name="Ecker J.R."/>
        </authorList>
    </citation>
    <scope>NUCLEOTIDE SEQUENCE [LARGE SCALE MRNA]</scope>
    <source>
        <strain>cv. Columbia</strain>
    </source>
</reference>
<reference key="5">
    <citation type="journal article" date="2006" name="Genome Biol.">
        <title>Mining the Arabidopsis thaliana genome for highly-divergent seven transmembrane receptors.</title>
        <authorList>
            <person name="Moriyama E.N."/>
            <person name="Strope P.K."/>
            <person name="Opiyo S.O."/>
            <person name="Chen Z."/>
            <person name="Jones A.M."/>
        </authorList>
    </citation>
    <scope>GENE FAMILY</scope>
</reference>
<reference key="6">
    <citation type="journal article" date="2008" name="Genome Biol.">
        <title>Whole proteome identification of plant candidate G-protein coupled receptors in Arabidopsis, rice, and poplar: computational prediction and in-vivo protein coupling.</title>
        <authorList>
            <person name="Gookin T.E."/>
            <person name="Kim J."/>
            <person name="Assmann S.M."/>
        </authorList>
    </citation>
    <scope>FUNCTION</scope>
    <scope>GENE FAMILY</scope>
    <scope>NOMENCLATURE</scope>
</reference>
<evidence type="ECO:0000250" key="1">
    <source>
        <dbReference type="UniProtKB" id="Q94AH1"/>
    </source>
</evidence>
<evidence type="ECO:0000255" key="2"/>
<evidence type="ECO:0000255" key="3">
    <source>
        <dbReference type="PROSITE-ProRule" id="PRU00498"/>
    </source>
</evidence>
<evidence type="ECO:0000269" key="4">
    <source>
    </source>
</evidence>
<evidence type="ECO:0000303" key="5">
    <source>
    </source>
</evidence>
<evidence type="ECO:0000305" key="6"/>
<evidence type="ECO:0000312" key="7">
    <source>
        <dbReference type="Araport" id="AT5G02630"/>
    </source>
</evidence>
<evidence type="ECO:0000312" key="8">
    <source>
        <dbReference type="EMBL" id="CAB86000.1"/>
    </source>
</evidence>
<proteinExistence type="evidence at transcript level"/>
<comment type="function">
    <text evidence="1 4">G-protein coupled receptor (PubMed:18671868). Plays a role in plants and microbes interactions (By similarity).</text>
</comment>
<comment type="subcellular location">
    <subcellularLocation>
        <location evidence="2">Membrane</location>
        <topology evidence="2">Multi-pass membrane protein</topology>
    </subcellularLocation>
</comment>
<comment type="similarity">
    <text evidence="6">Belongs to the LU7TM family.</text>
</comment>
<dbReference type="EMBL" id="AL162971">
    <property type="protein sequence ID" value="CAB86000.1"/>
    <property type="molecule type" value="Genomic_DNA"/>
</dbReference>
<dbReference type="EMBL" id="CP002688">
    <property type="protein sequence ID" value="AED90500.1"/>
    <property type="molecule type" value="Genomic_DNA"/>
</dbReference>
<dbReference type="EMBL" id="BT005363">
    <property type="protein sequence ID" value="AAO63427.1"/>
    <property type="molecule type" value="mRNA"/>
</dbReference>
<dbReference type="EMBL" id="AK117185">
    <property type="protein sequence ID" value="BAC41862.1"/>
    <property type="molecule type" value="mRNA"/>
</dbReference>
<dbReference type="PIR" id="T48284">
    <property type="entry name" value="T48284"/>
</dbReference>
<dbReference type="RefSeq" id="NP_195883.1">
    <property type="nucleotide sequence ID" value="NM_120341.3"/>
</dbReference>
<dbReference type="FunCoup" id="Q9LZ39">
    <property type="interactions" value="2936"/>
</dbReference>
<dbReference type="STRING" id="3702.Q9LZ39"/>
<dbReference type="GlyCosmos" id="Q9LZ39">
    <property type="glycosylation" value="3 sites, No reported glycans"/>
</dbReference>
<dbReference type="GlyGen" id="Q9LZ39">
    <property type="glycosylation" value="3 sites"/>
</dbReference>
<dbReference type="PaxDb" id="3702-AT5G02630.1"/>
<dbReference type="ProteomicsDB" id="187851"/>
<dbReference type="EnsemblPlants" id="AT5G02630.1">
    <property type="protein sequence ID" value="AT5G02630.1"/>
    <property type="gene ID" value="AT5G02630"/>
</dbReference>
<dbReference type="GeneID" id="831851"/>
<dbReference type="Gramene" id="AT5G02630.1">
    <property type="protein sequence ID" value="AT5G02630.1"/>
    <property type="gene ID" value="AT5G02630"/>
</dbReference>
<dbReference type="KEGG" id="ath:AT5G02630"/>
<dbReference type="Araport" id="AT5G02630"/>
<dbReference type="TAIR" id="AT5G02630">
    <property type="gene designation" value="CAND6"/>
</dbReference>
<dbReference type="eggNOG" id="KOG2569">
    <property type="taxonomic scope" value="Eukaryota"/>
</dbReference>
<dbReference type="HOGENOM" id="CLU_020277_4_0_1"/>
<dbReference type="InParanoid" id="Q9LZ39"/>
<dbReference type="OMA" id="YVLVIGY"/>
<dbReference type="PhylomeDB" id="Q9LZ39"/>
<dbReference type="PRO" id="PR:Q9LZ39"/>
<dbReference type="Proteomes" id="UP000006548">
    <property type="component" value="Chromosome 5"/>
</dbReference>
<dbReference type="ExpressionAtlas" id="Q9LZ39">
    <property type="expression patterns" value="baseline and differential"/>
</dbReference>
<dbReference type="GO" id="GO:0016020">
    <property type="term" value="C:membrane"/>
    <property type="evidence" value="ECO:0007669"/>
    <property type="project" value="UniProtKB-SubCell"/>
</dbReference>
<dbReference type="GO" id="GO:0004930">
    <property type="term" value="F:G protein-coupled receptor activity"/>
    <property type="evidence" value="ECO:0007669"/>
    <property type="project" value="UniProtKB-KW"/>
</dbReference>
<dbReference type="GO" id="GO:0007186">
    <property type="term" value="P:G protein-coupled receptor signaling pathway"/>
    <property type="evidence" value="ECO:0000314"/>
    <property type="project" value="UniProtKB"/>
</dbReference>
<dbReference type="InterPro" id="IPR054103">
    <property type="entry name" value="CAND6-7_N"/>
</dbReference>
<dbReference type="InterPro" id="IPR053937">
    <property type="entry name" value="GOST_TM"/>
</dbReference>
<dbReference type="InterPro" id="IPR009637">
    <property type="entry name" value="GPR107/GPR108-like"/>
</dbReference>
<dbReference type="PANTHER" id="PTHR21229">
    <property type="entry name" value="LUNG SEVEN TRANSMEMBRANE RECEPTOR"/>
    <property type="match status" value="1"/>
</dbReference>
<dbReference type="PANTHER" id="PTHR21229:SF2">
    <property type="entry name" value="RE59932P"/>
    <property type="match status" value="1"/>
</dbReference>
<dbReference type="Pfam" id="PF21904">
    <property type="entry name" value="CAND6-7_N"/>
    <property type="match status" value="1"/>
</dbReference>
<dbReference type="Pfam" id="PF06814">
    <property type="entry name" value="GOST_TM"/>
    <property type="match status" value="1"/>
</dbReference>
<sequence length="428" mass="48883">MTILPFLAAVFVLQLLSTLTVAEIKSFTISNDSRPVILLEKFGIIEIGHVTVSVSSVSVLSPILDSSKLGFFVLSEESLPHVLLELQQNFSFCVLDSHYILHFFTFVDLSPPPRSQFSKSYPITSPNDYSLFFANCVPETRVSMKVHTEIYHDLYPNGSRDYLLAGSAQLPGLYLVFFLCYLSFLCFWLCFCWNHKQIVKRIHLLMTALLLVKSLTLICAAVYKHYVKVTGTAHGWNIVFYIFQFISVVLLFMVIVLIGNGWSFLKPKLHVKEKKLLVIVVPLQVLANIASIVIGETGPYTQDWVSWNQIFFLADITCCCAIVFAMVWSMCCLRETSKTDGKAVKNLAKLPVLRKFYVLVIGYLFFTRIVVVVMKMKADFTYQWVSNAAEEIATLSFYCLMFYMFRPIEKNEYCDVDDEEEIVELSLK</sequence>
<organism>
    <name type="scientific">Arabidopsis thaliana</name>
    <name type="common">Mouse-ear cress</name>
    <dbReference type="NCBI Taxonomy" id="3702"/>
    <lineage>
        <taxon>Eukaryota</taxon>
        <taxon>Viridiplantae</taxon>
        <taxon>Streptophyta</taxon>
        <taxon>Embryophyta</taxon>
        <taxon>Tracheophyta</taxon>
        <taxon>Spermatophyta</taxon>
        <taxon>Magnoliopsida</taxon>
        <taxon>eudicotyledons</taxon>
        <taxon>Gunneridae</taxon>
        <taxon>Pentapetalae</taxon>
        <taxon>rosids</taxon>
        <taxon>malvids</taxon>
        <taxon>Brassicales</taxon>
        <taxon>Brassicaceae</taxon>
        <taxon>Camelineae</taxon>
        <taxon>Arabidopsis</taxon>
    </lineage>
</organism>
<name>CAND6_ARATH</name>
<protein>
    <recommendedName>
        <fullName evidence="5">Protein CANDIDATE G-PROTEIN COUPLED RECEPTOR 6</fullName>
        <shortName evidence="5">AtCand6</shortName>
    </recommendedName>
</protein>
<keyword id="KW-0297">G-protein coupled receptor</keyword>
<keyword id="KW-0325">Glycoprotein</keyword>
<keyword id="KW-0472">Membrane</keyword>
<keyword id="KW-0675">Receptor</keyword>
<keyword id="KW-1185">Reference proteome</keyword>
<keyword id="KW-0732">Signal</keyword>
<keyword id="KW-0807">Transducer</keyword>
<keyword id="KW-0812">Transmembrane</keyword>
<keyword id="KW-1133">Transmembrane helix</keyword>
<accession>Q9LZ39</accession>